<keyword id="KW-0067">ATP-binding</keyword>
<keyword id="KW-0436">Ligase</keyword>
<keyword id="KW-0460">Magnesium</keyword>
<keyword id="KW-0479">Metal-binding</keyword>
<keyword id="KW-0547">Nucleotide-binding</keyword>
<keyword id="KW-0658">Purine biosynthesis</keyword>
<accession>A4T9D5</accession>
<reference key="1">
    <citation type="submission" date="2007-04" db="EMBL/GenBank/DDBJ databases">
        <title>Complete sequence of chromosome of Mycobacterium gilvum PYR-GCK.</title>
        <authorList>
            <consortium name="US DOE Joint Genome Institute"/>
            <person name="Copeland A."/>
            <person name="Lucas S."/>
            <person name="Lapidus A."/>
            <person name="Barry K."/>
            <person name="Detter J.C."/>
            <person name="Glavina del Rio T."/>
            <person name="Hammon N."/>
            <person name="Israni S."/>
            <person name="Dalin E."/>
            <person name="Tice H."/>
            <person name="Pitluck S."/>
            <person name="Chain P."/>
            <person name="Malfatti S."/>
            <person name="Shin M."/>
            <person name="Vergez L."/>
            <person name="Schmutz J."/>
            <person name="Larimer F."/>
            <person name="Land M."/>
            <person name="Hauser L."/>
            <person name="Kyrpides N."/>
            <person name="Mikhailova N."/>
            <person name="Miller C."/>
            <person name="Richardson P."/>
        </authorList>
    </citation>
    <scope>NUCLEOTIDE SEQUENCE [LARGE SCALE GENOMIC DNA]</scope>
    <source>
        <strain>PYR-GCK</strain>
    </source>
</reference>
<dbReference type="EC" id="6.3.1.21" evidence="1"/>
<dbReference type="EMBL" id="CP000656">
    <property type="protein sequence ID" value="ABP44517.1"/>
    <property type="molecule type" value="Genomic_DNA"/>
</dbReference>
<dbReference type="SMR" id="A4T9D5"/>
<dbReference type="STRING" id="350054.Mflv_2039"/>
<dbReference type="KEGG" id="mgi:Mflv_2039"/>
<dbReference type="eggNOG" id="COG0027">
    <property type="taxonomic scope" value="Bacteria"/>
</dbReference>
<dbReference type="HOGENOM" id="CLU_011534_1_3_11"/>
<dbReference type="OrthoDB" id="9804625at2"/>
<dbReference type="UniPathway" id="UPA00074">
    <property type="reaction ID" value="UER00127"/>
</dbReference>
<dbReference type="GO" id="GO:0005829">
    <property type="term" value="C:cytosol"/>
    <property type="evidence" value="ECO:0007669"/>
    <property type="project" value="TreeGrafter"/>
</dbReference>
<dbReference type="GO" id="GO:0005524">
    <property type="term" value="F:ATP binding"/>
    <property type="evidence" value="ECO:0007669"/>
    <property type="project" value="UniProtKB-UniRule"/>
</dbReference>
<dbReference type="GO" id="GO:0000287">
    <property type="term" value="F:magnesium ion binding"/>
    <property type="evidence" value="ECO:0007669"/>
    <property type="project" value="InterPro"/>
</dbReference>
<dbReference type="GO" id="GO:0043815">
    <property type="term" value="F:phosphoribosylglycinamide formyltransferase 2 activity"/>
    <property type="evidence" value="ECO:0007669"/>
    <property type="project" value="UniProtKB-UniRule"/>
</dbReference>
<dbReference type="GO" id="GO:0004644">
    <property type="term" value="F:phosphoribosylglycinamide formyltransferase activity"/>
    <property type="evidence" value="ECO:0007669"/>
    <property type="project" value="InterPro"/>
</dbReference>
<dbReference type="GO" id="GO:0006189">
    <property type="term" value="P:'de novo' IMP biosynthetic process"/>
    <property type="evidence" value="ECO:0007669"/>
    <property type="project" value="UniProtKB-UniRule"/>
</dbReference>
<dbReference type="Gene3D" id="3.40.50.20">
    <property type="match status" value="1"/>
</dbReference>
<dbReference type="Gene3D" id="3.30.1490.20">
    <property type="entry name" value="ATP-grasp fold, A domain"/>
    <property type="match status" value="1"/>
</dbReference>
<dbReference type="Gene3D" id="3.30.470.20">
    <property type="entry name" value="ATP-grasp fold, B domain"/>
    <property type="match status" value="1"/>
</dbReference>
<dbReference type="HAMAP" id="MF_01643">
    <property type="entry name" value="PurT"/>
    <property type="match status" value="1"/>
</dbReference>
<dbReference type="InterPro" id="IPR011761">
    <property type="entry name" value="ATP-grasp"/>
</dbReference>
<dbReference type="InterPro" id="IPR003135">
    <property type="entry name" value="ATP-grasp_carboxylate-amine"/>
</dbReference>
<dbReference type="InterPro" id="IPR013815">
    <property type="entry name" value="ATP_grasp_subdomain_1"/>
</dbReference>
<dbReference type="InterPro" id="IPR016185">
    <property type="entry name" value="PreATP-grasp_dom_sf"/>
</dbReference>
<dbReference type="InterPro" id="IPR005862">
    <property type="entry name" value="PurT"/>
</dbReference>
<dbReference type="InterPro" id="IPR054350">
    <property type="entry name" value="PurT/PurK_preATP-grasp"/>
</dbReference>
<dbReference type="InterPro" id="IPR048740">
    <property type="entry name" value="PurT_C"/>
</dbReference>
<dbReference type="InterPro" id="IPR011054">
    <property type="entry name" value="Rudment_hybrid_motif"/>
</dbReference>
<dbReference type="NCBIfam" id="NF006766">
    <property type="entry name" value="PRK09288.1"/>
    <property type="match status" value="1"/>
</dbReference>
<dbReference type="NCBIfam" id="TIGR01142">
    <property type="entry name" value="purT"/>
    <property type="match status" value="1"/>
</dbReference>
<dbReference type="PANTHER" id="PTHR43055">
    <property type="entry name" value="FORMATE-DEPENDENT PHOSPHORIBOSYLGLYCINAMIDE FORMYLTRANSFERASE"/>
    <property type="match status" value="1"/>
</dbReference>
<dbReference type="PANTHER" id="PTHR43055:SF1">
    <property type="entry name" value="FORMATE-DEPENDENT PHOSPHORIBOSYLGLYCINAMIDE FORMYLTRANSFERASE"/>
    <property type="match status" value="1"/>
</dbReference>
<dbReference type="Pfam" id="PF02222">
    <property type="entry name" value="ATP-grasp"/>
    <property type="match status" value="1"/>
</dbReference>
<dbReference type="Pfam" id="PF21244">
    <property type="entry name" value="PurT_C"/>
    <property type="match status" value="1"/>
</dbReference>
<dbReference type="Pfam" id="PF22660">
    <property type="entry name" value="RS_preATP-grasp-like"/>
    <property type="match status" value="1"/>
</dbReference>
<dbReference type="SUPFAM" id="SSF56059">
    <property type="entry name" value="Glutathione synthetase ATP-binding domain-like"/>
    <property type="match status" value="1"/>
</dbReference>
<dbReference type="SUPFAM" id="SSF52440">
    <property type="entry name" value="PreATP-grasp domain"/>
    <property type="match status" value="1"/>
</dbReference>
<dbReference type="SUPFAM" id="SSF51246">
    <property type="entry name" value="Rudiment single hybrid motif"/>
    <property type="match status" value="1"/>
</dbReference>
<dbReference type="PROSITE" id="PS50975">
    <property type="entry name" value="ATP_GRASP"/>
    <property type="match status" value="1"/>
</dbReference>
<protein>
    <recommendedName>
        <fullName evidence="1">Formate-dependent phosphoribosylglycinamide formyltransferase</fullName>
        <ecNumber evidence="1">6.3.1.21</ecNumber>
    </recommendedName>
    <alternativeName>
        <fullName evidence="1">5'-phosphoribosylglycinamide transformylase 2</fullName>
    </alternativeName>
    <alternativeName>
        <fullName evidence="1">Formate-dependent GAR transformylase</fullName>
    </alternativeName>
    <alternativeName>
        <fullName evidence="1">GAR transformylase 2</fullName>
        <shortName evidence="1">GART 2</shortName>
    </alternativeName>
    <alternativeName>
        <fullName evidence="1">Non-folate glycinamide ribonucleotide transformylase</fullName>
    </alternativeName>
    <alternativeName>
        <fullName evidence="1">Phosphoribosylglycinamide formyltransferase 2</fullName>
    </alternativeName>
</protein>
<evidence type="ECO:0000255" key="1">
    <source>
        <dbReference type="HAMAP-Rule" id="MF_01643"/>
    </source>
</evidence>
<sequence length="400" mass="43141">MTTIGTPLSPRATKVMLLGSGELGREVLIALQRLGVETIAVDRYDNAPGQQVAHHARTIAMTDPEQLRALIEAERPDLVVPEIEAIATPALEALEAEGVVTVIPTARAARLTMDREGIRRLAAETLGLPTSPYRFCDSLEELRAAIDGTVGYPCVVKPVMSSSGKGQSKIDGPEDVAPAWEYAMSGSRVSNTRIIVEGFVDFDYEITLLTVRARGASGEVQTQFCEPIGHRQVSGDYVESWQPHPMPSTALDRSRQIAKAVTENLGGQGIFGVELFVKGDDVWFSEVSPRPHDTGMVTMVTQWQNEFELHARAILGLPVDTTLKSPGASAVIYGGVDAEGVVFDGVDRALAVPHTDIRLFGKPESFVNRRMGVALAFADDVDTARRNAAEAASRVTPRAV</sequence>
<organism>
    <name type="scientific">Mycolicibacterium gilvum (strain PYR-GCK)</name>
    <name type="common">Mycobacterium gilvum (strain PYR-GCK)</name>
    <dbReference type="NCBI Taxonomy" id="350054"/>
    <lineage>
        <taxon>Bacteria</taxon>
        <taxon>Bacillati</taxon>
        <taxon>Actinomycetota</taxon>
        <taxon>Actinomycetes</taxon>
        <taxon>Mycobacteriales</taxon>
        <taxon>Mycobacteriaceae</taxon>
        <taxon>Mycolicibacterium</taxon>
    </lineage>
</organism>
<proteinExistence type="inferred from homology"/>
<name>PURT_MYCGI</name>
<feature type="chain" id="PRO_1000186885" description="Formate-dependent phosphoribosylglycinamide formyltransferase">
    <location>
        <begin position="1"/>
        <end position="400"/>
    </location>
</feature>
<feature type="domain" description="ATP-grasp" evidence="1">
    <location>
        <begin position="120"/>
        <end position="315"/>
    </location>
</feature>
<feature type="binding site" evidence="1">
    <location>
        <begin position="22"/>
        <end position="23"/>
    </location>
    <ligand>
        <name>N(1)-(5-phospho-beta-D-ribosyl)glycinamide</name>
        <dbReference type="ChEBI" id="CHEBI:143788"/>
    </ligand>
</feature>
<feature type="binding site" evidence="1">
    <location>
        <position position="82"/>
    </location>
    <ligand>
        <name>N(1)-(5-phospho-beta-D-ribosyl)glycinamide</name>
        <dbReference type="ChEBI" id="CHEBI:143788"/>
    </ligand>
</feature>
<feature type="binding site" evidence="1">
    <location>
        <position position="115"/>
    </location>
    <ligand>
        <name>ATP</name>
        <dbReference type="ChEBI" id="CHEBI:30616"/>
    </ligand>
</feature>
<feature type="binding site" evidence="1">
    <location>
        <position position="157"/>
    </location>
    <ligand>
        <name>ATP</name>
        <dbReference type="ChEBI" id="CHEBI:30616"/>
    </ligand>
</feature>
<feature type="binding site" evidence="1">
    <location>
        <begin position="162"/>
        <end position="167"/>
    </location>
    <ligand>
        <name>ATP</name>
        <dbReference type="ChEBI" id="CHEBI:30616"/>
    </ligand>
</feature>
<feature type="binding site" evidence="1">
    <location>
        <begin position="197"/>
        <end position="200"/>
    </location>
    <ligand>
        <name>ATP</name>
        <dbReference type="ChEBI" id="CHEBI:30616"/>
    </ligand>
</feature>
<feature type="binding site" evidence="1">
    <location>
        <position position="205"/>
    </location>
    <ligand>
        <name>ATP</name>
        <dbReference type="ChEBI" id="CHEBI:30616"/>
    </ligand>
</feature>
<feature type="binding site" evidence="1">
    <location>
        <position position="274"/>
    </location>
    <ligand>
        <name>Mg(2+)</name>
        <dbReference type="ChEBI" id="CHEBI:18420"/>
    </ligand>
</feature>
<feature type="binding site" evidence="1">
    <location>
        <position position="286"/>
    </location>
    <ligand>
        <name>Mg(2+)</name>
        <dbReference type="ChEBI" id="CHEBI:18420"/>
    </ligand>
</feature>
<feature type="binding site" evidence="1">
    <location>
        <position position="293"/>
    </location>
    <ligand>
        <name>N(1)-(5-phospho-beta-D-ribosyl)glycinamide</name>
        <dbReference type="ChEBI" id="CHEBI:143788"/>
    </ligand>
</feature>
<feature type="binding site" evidence="1">
    <location>
        <position position="362"/>
    </location>
    <ligand>
        <name>N(1)-(5-phospho-beta-D-ribosyl)glycinamide</name>
        <dbReference type="ChEBI" id="CHEBI:143788"/>
    </ligand>
</feature>
<feature type="binding site" evidence="1">
    <location>
        <begin position="369"/>
        <end position="370"/>
    </location>
    <ligand>
        <name>N(1)-(5-phospho-beta-D-ribosyl)glycinamide</name>
        <dbReference type="ChEBI" id="CHEBI:143788"/>
    </ligand>
</feature>
<comment type="function">
    <text evidence="1">Involved in the de novo purine biosynthesis. Catalyzes the transfer of formate to 5-phospho-ribosyl-glycinamide (GAR), producing 5-phospho-ribosyl-N-formylglycinamide (FGAR). Formate is provided by PurU via hydrolysis of 10-formyl-tetrahydrofolate.</text>
</comment>
<comment type="catalytic activity">
    <reaction evidence="1">
        <text>N(1)-(5-phospho-beta-D-ribosyl)glycinamide + formate + ATP = N(2)-formyl-N(1)-(5-phospho-beta-D-ribosyl)glycinamide + ADP + phosphate + H(+)</text>
        <dbReference type="Rhea" id="RHEA:24829"/>
        <dbReference type="ChEBI" id="CHEBI:15378"/>
        <dbReference type="ChEBI" id="CHEBI:15740"/>
        <dbReference type="ChEBI" id="CHEBI:30616"/>
        <dbReference type="ChEBI" id="CHEBI:43474"/>
        <dbReference type="ChEBI" id="CHEBI:143788"/>
        <dbReference type="ChEBI" id="CHEBI:147286"/>
        <dbReference type="ChEBI" id="CHEBI:456216"/>
        <dbReference type="EC" id="6.3.1.21"/>
    </reaction>
    <physiologicalReaction direction="left-to-right" evidence="1">
        <dbReference type="Rhea" id="RHEA:24830"/>
    </physiologicalReaction>
</comment>
<comment type="pathway">
    <text evidence="1">Purine metabolism; IMP biosynthesis via de novo pathway; N(2)-formyl-N(1)-(5-phospho-D-ribosyl)glycinamide from N(1)-(5-phospho-D-ribosyl)glycinamide (formate route): step 1/1.</text>
</comment>
<comment type="subunit">
    <text evidence="1">Homodimer.</text>
</comment>
<comment type="similarity">
    <text evidence="1">Belongs to the PurK/PurT family.</text>
</comment>
<gene>
    <name evidence="1" type="primary">purT</name>
    <name type="ordered locus">Mflv_2039</name>
</gene>